<organism>
    <name type="scientific">Streptomyces coelicolor (strain ATCC BAA-471 / A3(2) / M145)</name>
    <dbReference type="NCBI Taxonomy" id="100226"/>
    <lineage>
        <taxon>Bacteria</taxon>
        <taxon>Bacillati</taxon>
        <taxon>Actinomycetota</taxon>
        <taxon>Actinomycetes</taxon>
        <taxon>Kitasatosporales</taxon>
        <taxon>Streptomycetaceae</taxon>
        <taxon>Streptomyces</taxon>
        <taxon>Streptomyces albidoflavus group</taxon>
    </lineage>
</organism>
<accession>O88037</accession>
<gene>
    <name evidence="9" type="primary">ramC</name>
    <name type="ordered locus">SCO6681</name>
</gene>
<sequence>MTAATVRGGTPRDSVVSVSNRWEGAGVNKGYAVYCDADPYFYDAPHRTADRTGAARSRYAAASSPVPEGWQRHESGDWLALRPADADLPAQGWKIHVSACLDNAESVLDRVWRHCVDGGTAFKFVPSRYLLHQRNAKYADRAGSGKFVTVYPADEAEFERLVGELSELLAGEPGPHILSDLRIGDGPVHVRYGGFTRRDCYDADGELRPAVSGPDGVLVPDLRGPVFRIPEWVDPPAFLRPHLDARSAVTVTGMPYTVESALHFSNGGGVYLARDTRTGARVVLKEARPHAGLAADGADAVTRLHRERRALERLSGLACTPEVLDHRTVGEHHFLVLEHIDGKPLNTFFARRHPLIEADPGERRLAEYTDWALDVHARVERAVAEVHARGVVFNDLHLFNIMVRDDDSVALLDFEAAHHVDEAGRQIVANPGFVAPPDRRGVAVDRYALACLRIVLFLPLTSLLAVDRHKAAHLAEVVAEQFPVDRAFLDAAVEEITRVDGSTRVDGSTRADETTRADETTRLDVTTRVHGAPDAARRPAGPVAPVRPDDWPRSRDSMAAAIRASATPSRTDRLFPGDIAQFATAGGGLAFAHGAAGVLYALAESGAGRDEDGEQWLLERTKRPPSGMPLGFHDGLAGLAWTLERLGHRDRALDLAELLLDQPLDHLGPDLHGGTAGLGLALESLAATTGQAALHSAALHCAELAADGLPGGSVPADRVSRGRARAGLLYGGAGRALLFLRLFERTRDSALLDLARDALRQDLARCVRGAGGALQVDEGWRTMPYLGAGSVGIGMVLDDYLAHRADEEFARAANEIVAAAQAMFYAQPGLYRGVAGMVLHLGRTTATAPGTGPRAVRRQLDALSWHAMSYRDRLAFPGEQMMRLSMDLSTGTAGCLLAVASVLGDAPAGLPFLPPPRRSGGPLTRPHQEP</sequence>
<feature type="chain" id="PRO_0000445440" description="Probable SapB synthase">
    <location>
        <begin position="1"/>
        <end position="930"/>
    </location>
</feature>
<feature type="transmembrane region" description="Helical" evidence="1">
    <location>
        <begin position="447"/>
        <end position="467"/>
    </location>
</feature>
<feature type="domain" description="Protein kinase" evidence="2">
    <location>
        <begin position="256"/>
        <end position="516"/>
    </location>
</feature>
<feature type="region of interest" description="Disordered" evidence="3">
    <location>
        <begin position="501"/>
        <end position="558"/>
    </location>
</feature>
<feature type="region of interest" description="Disordered" evidence="3">
    <location>
        <begin position="911"/>
        <end position="930"/>
    </location>
</feature>
<feature type="compositionally biased region" description="Basic and acidic residues" evidence="3">
    <location>
        <begin position="501"/>
        <end position="527"/>
    </location>
</feature>
<feature type="compositionally biased region" description="Low complexity" evidence="3">
    <location>
        <begin position="532"/>
        <end position="546"/>
    </location>
</feature>
<feature type="compositionally biased region" description="Basic and acidic residues" evidence="3">
    <location>
        <begin position="547"/>
        <end position="556"/>
    </location>
</feature>
<feature type="active site" description="Proton acceptor" evidence="2">
    <location>
        <position position="395"/>
    </location>
</feature>
<feature type="binding site" evidence="2">
    <location>
        <begin position="262"/>
        <end position="270"/>
    </location>
    <ligand>
        <name>ATP</name>
        <dbReference type="ChEBI" id="CHEBI:30616"/>
    </ligand>
</feature>
<feature type="binding site" evidence="2">
    <location>
        <position position="285"/>
    </location>
    <ligand>
        <name>ATP</name>
        <dbReference type="ChEBI" id="CHEBI:30616"/>
    </ligand>
</feature>
<feature type="mutagenesis site" description="Does not restore aerial hyphae formation to a ramC deletion." evidence="5">
    <original>K</original>
    <variation>A</variation>
    <location>
        <position position="285"/>
    </location>
</feature>
<feature type="mutagenesis site" description="Does not restore aerial hyphae formation to a ramC deletion." evidence="5">
    <original>D</original>
    <variation>A</variation>
    <location>
        <position position="395"/>
    </location>
</feature>
<feature type="mutagenesis site" description="Does not restore aerial hyphae formation to a ramC deletion." evidence="5">
    <original>D</original>
    <variation>A</variation>
    <location>
        <position position="413"/>
    </location>
</feature>
<feature type="mutagenesis site" description="Partially restores aerial hyphae formation to a ramC deletion." evidence="5">
    <original>D</original>
    <variation>A</variation>
    <location>
        <position position="438"/>
    </location>
</feature>
<keyword id="KW-0067">ATP-binding</keyword>
<keyword id="KW-1003">Cell membrane</keyword>
<keyword id="KW-0418">Kinase</keyword>
<keyword id="KW-0472">Membrane</keyword>
<keyword id="KW-0547">Nucleotide-binding</keyword>
<keyword id="KW-1185">Reference proteome</keyword>
<keyword id="KW-0723">Serine/threonine-protein kinase</keyword>
<keyword id="KW-0808">Transferase</keyword>
<keyword id="KW-0812">Transmembrane</keyword>
<keyword id="KW-1133">Transmembrane helix</keyword>
<dbReference type="EC" id="2.7.-.-" evidence="2"/>
<dbReference type="EMBL" id="AL939128">
    <property type="protein sequence ID" value="CAA19960.1"/>
    <property type="molecule type" value="Genomic_DNA"/>
</dbReference>
<dbReference type="PIR" id="T35180">
    <property type="entry name" value="T35180"/>
</dbReference>
<dbReference type="RefSeq" id="NP_630756.1">
    <property type="nucleotide sequence ID" value="NC_003888.3"/>
</dbReference>
<dbReference type="SMR" id="O88037"/>
<dbReference type="STRING" id="100226.gene:17764339"/>
<dbReference type="PaxDb" id="100226-SCO6681"/>
<dbReference type="KEGG" id="sco:SCO6681"/>
<dbReference type="PATRIC" id="fig|100226.15.peg.6786"/>
<dbReference type="eggNOG" id="COG0515">
    <property type="taxonomic scope" value="Bacteria"/>
</dbReference>
<dbReference type="HOGENOM" id="CLU_014914_0_0_11"/>
<dbReference type="InParanoid" id="O88037"/>
<dbReference type="OrthoDB" id="1492512at2"/>
<dbReference type="Proteomes" id="UP000001973">
    <property type="component" value="Chromosome"/>
</dbReference>
<dbReference type="GO" id="GO:0005886">
    <property type="term" value="C:plasma membrane"/>
    <property type="evidence" value="ECO:0007669"/>
    <property type="project" value="UniProtKB-SubCell"/>
</dbReference>
<dbReference type="GO" id="GO:0005524">
    <property type="term" value="F:ATP binding"/>
    <property type="evidence" value="ECO:0007669"/>
    <property type="project" value="UniProtKB-KW"/>
</dbReference>
<dbReference type="GO" id="GO:0004674">
    <property type="term" value="F:protein serine/threonine kinase activity"/>
    <property type="evidence" value="ECO:0000318"/>
    <property type="project" value="GO_Central"/>
</dbReference>
<dbReference type="GO" id="GO:0031179">
    <property type="term" value="P:peptide modification"/>
    <property type="evidence" value="ECO:0007669"/>
    <property type="project" value="InterPro"/>
</dbReference>
<dbReference type="CDD" id="cd04791">
    <property type="entry name" value="LanC_SerThrkinase"/>
    <property type="match status" value="1"/>
</dbReference>
<dbReference type="Gene3D" id="1.50.10.20">
    <property type="match status" value="1"/>
</dbReference>
<dbReference type="Gene3D" id="3.30.200.20">
    <property type="entry name" value="Phosphorylase Kinase, domain 1"/>
    <property type="match status" value="1"/>
</dbReference>
<dbReference type="Gene3D" id="1.10.510.10">
    <property type="entry name" value="Transferase(Phosphotransferase) domain 1"/>
    <property type="match status" value="1"/>
</dbReference>
<dbReference type="InterPro" id="IPR053524">
    <property type="entry name" value="Aerial_hyphae_peptide-synth"/>
</dbReference>
<dbReference type="InterPro" id="IPR011009">
    <property type="entry name" value="Kinase-like_dom_sf"/>
</dbReference>
<dbReference type="InterPro" id="IPR007822">
    <property type="entry name" value="LANC-like"/>
</dbReference>
<dbReference type="InterPro" id="IPR000719">
    <property type="entry name" value="Prot_kinase_dom"/>
</dbReference>
<dbReference type="NCBIfam" id="NF038151">
    <property type="entry name" value="lanthi_synth_III"/>
    <property type="match status" value="1"/>
</dbReference>
<dbReference type="Pfam" id="PF00069">
    <property type="entry name" value="Pkinase"/>
    <property type="match status" value="1"/>
</dbReference>
<dbReference type="SMART" id="SM01260">
    <property type="entry name" value="LANC_like"/>
    <property type="match status" value="1"/>
</dbReference>
<dbReference type="SMART" id="SM00220">
    <property type="entry name" value="S_TKc"/>
    <property type="match status" value="1"/>
</dbReference>
<dbReference type="SUPFAM" id="SSF158745">
    <property type="entry name" value="LanC-like"/>
    <property type="match status" value="1"/>
</dbReference>
<dbReference type="SUPFAM" id="SSF56112">
    <property type="entry name" value="Protein kinase-like (PK-like)"/>
    <property type="match status" value="1"/>
</dbReference>
<dbReference type="PROSITE" id="PS50011">
    <property type="entry name" value="PROTEIN_KINASE_DOM"/>
    <property type="match status" value="1"/>
</dbReference>
<evidence type="ECO:0000255" key="1"/>
<evidence type="ECO:0000255" key="2">
    <source>
        <dbReference type="PROSITE-ProRule" id="PRU00159"/>
    </source>
</evidence>
<evidence type="ECO:0000256" key="3">
    <source>
        <dbReference type="SAM" id="MobiDB-lite"/>
    </source>
</evidence>
<evidence type="ECO:0000269" key="4">
    <source>
    </source>
</evidence>
<evidence type="ECO:0000269" key="5">
    <source>
    </source>
</evidence>
<evidence type="ECO:0000269" key="6">
    <source>
    </source>
</evidence>
<evidence type="ECO:0000269" key="7">
    <source>
    </source>
</evidence>
<evidence type="ECO:0000269" key="8">
    <source>
    </source>
</evidence>
<evidence type="ECO:0000303" key="9">
    <source>
    </source>
</evidence>
<evidence type="ECO:0000305" key="10"/>
<evidence type="ECO:0000305" key="11">
    <source>
    </source>
</evidence>
<evidence type="ECO:0000305" key="12">
    <source>
    </source>
</evidence>
<proteinExistence type="evidence at protein level"/>
<comment type="function">
    <text evidence="4 5 6 12">Required for aerial hyphae formation (PubMed:12100547, PubMed:12169618, PubMed:12453210). Probably involved in processing the precursor of SapB to its mature form (Probable).</text>
</comment>
<comment type="subcellular location">
    <subcellularLocation>
        <location evidence="5">Cell membrane</location>
        <topology evidence="1">Single-pass membrane protein</topology>
    </subcellularLocation>
</comment>
<comment type="induction">
    <text evidence="4 6 8">Expressed in substrate hyphae and very immature aerial hyphae. Expression commences by 24 hours after germination, is maximal at 36 hours and has disappeared by 72 hours; expression is higher in wild-type strain J1501 versus M145 (at protein level). Requires bldD, cprA and ramR for expression, deletion of bldM or bldN increases accumulation of RamC (PubMed:12100547, PubMed:12453210). Probably part of the ramC-ramS-ramA-ramB operon (PubMed:12100547, PubMed:12453210). Transcribed from 23 to about 40 hours after germination, requires ramR for expression (PubMed:22486809).</text>
</comment>
<comment type="disruption phenotype">
    <text evidence="4 5 6 7">Deletion of ramC leads to loss of aerial hyphae and sporulation on rich or minimal solid medium after 4 days growth (PubMed:12100547, PubMed:12169618, PubMed:12453210). Deletion of the ramC-ramS-ramA-ramB operon on rich medium leads to an initially bald (no aerial hyphae) phenotype; after 4 days develops a substantial aerial mycelium. Wild-type mycelium on minimal medium. No expression of SapB, normal expression of chaplins. A complete chaplin-negative plus ram-negative strain (deletion of ramR or the ramC-ramS-ramA-ramB operon) leads to the complete loss of robust aerial hyphae (PubMed:17462011).</text>
</comment>
<comment type="similarity">
    <text evidence="10">In the N-terminal section; belongs to the protein kinase superfamily.</text>
</comment>
<comment type="caution">
    <text evidence="11">It is uncertain whether Met-1 or Val-27 is the initiator.</text>
</comment>
<reference key="1">
    <citation type="journal article" date="2002" name="Nature">
        <title>Complete genome sequence of the model actinomycete Streptomyces coelicolor A3(2).</title>
        <authorList>
            <person name="Bentley S.D."/>
            <person name="Chater K.F."/>
            <person name="Cerdeno-Tarraga A.-M."/>
            <person name="Challis G.L."/>
            <person name="Thomson N.R."/>
            <person name="James K.D."/>
            <person name="Harris D.E."/>
            <person name="Quail M.A."/>
            <person name="Kieser H."/>
            <person name="Harper D."/>
            <person name="Bateman A."/>
            <person name="Brown S."/>
            <person name="Chandra G."/>
            <person name="Chen C.W."/>
            <person name="Collins M."/>
            <person name="Cronin A."/>
            <person name="Fraser A."/>
            <person name="Goble A."/>
            <person name="Hidalgo J."/>
            <person name="Hornsby T."/>
            <person name="Howarth S."/>
            <person name="Huang C.-H."/>
            <person name="Kieser T."/>
            <person name="Larke L."/>
            <person name="Murphy L.D."/>
            <person name="Oliver K."/>
            <person name="O'Neil S."/>
            <person name="Rabbinowitsch E."/>
            <person name="Rajandream M.A."/>
            <person name="Rutherford K.M."/>
            <person name="Rutter S."/>
            <person name="Seeger K."/>
            <person name="Saunders D."/>
            <person name="Sharp S."/>
            <person name="Squares R."/>
            <person name="Squares S."/>
            <person name="Taylor K."/>
            <person name="Warren T."/>
            <person name="Wietzorrek A."/>
            <person name="Woodward J.R."/>
            <person name="Barrell B.G."/>
            <person name="Parkhill J."/>
            <person name="Hopwood D.A."/>
        </authorList>
    </citation>
    <scope>NUCLEOTIDE SEQUENCE [LARGE SCALE GENOMIC DNA]</scope>
    <source>
        <strain>ATCC BAA-471 / A3(2) / M145</strain>
    </source>
</reference>
<reference key="2">
    <citation type="journal article" date="2002" name="J. Bacteriol.">
        <title>Membrane association and kinase-like motifs of the RamC protein of Streptomyces coelicolor.</title>
        <authorList>
            <person name="Hudson M.E."/>
            <person name="Zhang D."/>
            <person name="Nodwell J.R."/>
        </authorList>
    </citation>
    <scope>FUNCTION</scope>
    <scope>SUBCELLULAR LOCATION</scope>
    <scope>DISRUPTION PHENOTYPE</scope>
    <scope>MUTAGENESIS OF LYS-285; ASP-395; ASP-413 AND ASP-438</scope>
    <source>
        <strain>ATCC BAA-471 / A3(2) / M145</strain>
    </source>
</reference>
<reference key="3">
    <citation type="journal article" date="2002" name="Mol. Microbiol.">
        <title>The ramC gene is required for morphogenesis in Streptomyces coelicolor and expressed in a cell type-specific manner under the direct control of RamR.</title>
        <authorList>
            <person name="O'Connor T.J."/>
            <person name="Kanellis P."/>
            <person name="Nodwell J.R."/>
        </authorList>
    </citation>
    <scope>FUNCTION</scope>
    <scope>INDUCTION</scope>
    <scope>OPERON</scope>
    <scope>DISRUPTION PHENOTYPE</scope>
    <source>
        <strain>A3(2) / J1501</strain>
        <strain>ATCC BAA-471 / A3(2) / M145</strain>
    </source>
</reference>
<reference key="4">
    <citation type="journal article" date="2002" name="Mol. Microbiol.">
        <title>A central regulator of morphological differentiation in the multicellular bacterium Streptomyces coelicolor.</title>
        <authorList>
            <person name="Nguyen K.T."/>
            <person name="Willey J.M."/>
            <person name="Nguyen L.D."/>
            <person name="Nguyen L.T."/>
            <person name="Viollier P.H."/>
            <person name="Thompson C.J."/>
        </authorList>
    </citation>
    <scope>FUNCTION</scope>
    <scope>INDUCTION</scope>
    <scope>DISRUPTION PHENOTYPE</scope>
    <source>
        <strain>A3(2) / J1501</strain>
    </source>
</reference>
<reference key="5">
    <citation type="journal article" date="2004" name="Proc. Natl. Acad. Sci. U.S.A.">
        <title>The SapB morphogen is a lantibiotic-like peptide derived from the product of the developmental gene ramS in Streptomyces coelicolor.</title>
        <authorList>
            <person name="Kodani S."/>
            <person name="Hudson M.E."/>
            <person name="Durrant M.C."/>
            <person name="Buttner M.J."/>
            <person name="Nodwell J.R."/>
            <person name="Willey J.M."/>
        </authorList>
    </citation>
    <scope>FUNCTION</scope>
    <source>
        <strain>A3(2) / J1501</strain>
    </source>
</reference>
<reference key="6">
    <citation type="journal article" date="2007" name="Mol. Microbiol.">
        <title>SapB and the chaplins: connections between morphogenetic proteins in Streptomyces coelicolor.</title>
        <authorList>
            <person name="Capstick D.S."/>
            <person name="Willey J.M."/>
            <person name="Buttner M.J."/>
            <person name="Elliot M.A."/>
        </authorList>
    </citation>
    <scope>DISRUPTION PHENOTYPE</scope>
    <source>
        <strain>A3(2) / M600</strain>
    </source>
</reference>
<reference key="7">
    <citation type="journal article" date="2012" name="Mol. Microbiol.">
        <title>Multi-tier regulation of the streptomycete morphogenetic peptide SapB.</title>
        <authorList>
            <person name="Gaskell A.A."/>
            <person name="Giovinazzo J.A."/>
            <person name="Fonte V."/>
            <person name="Willey J.M."/>
        </authorList>
    </citation>
    <scope>INDUCTION</scope>
    <source>
        <strain>A3(2) / M600</strain>
    </source>
</reference>
<protein>
    <recommendedName>
        <fullName evidence="9">Probable SapB synthase</fullName>
        <ecNumber evidence="2">2.7.-.-</ecNumber>
    </recommendedName>
</protein>
<name>RAMC_STRCO</name>